<proteinExistence type="inferred from homology"/>
<reference key="1">
    <citation type="journal article" date="2004" name="J. Bacteriol.">
        <title>Complete genome sequence of the genetically tractable hydrogenotrophic methanogen Methanococcus maripaludis.</title>
        <authorList>
            <person name="Hendrickson E.L."/>
            <person name="Kaul R."/>
            <person name="Zhou Y."/>
            <person name="Bovee D."/>
            <person name="Chapman P."/>
            <person name="Chung J."/>
            <person name="Conway de Macario E."/>
            <person name="Dodsworth J.A."/>
            <person name="Gillett W."/>
            <person name="Graham D.E."/>
            <person name="Hackett M."/>
            <person name="Haydock A.K."/>
            <person name="Kang A."/>
            <person name="Land M.L."/>
            <person name="Levy R."/>
            <person name="Lie T.J."/>
            <person name="Major T.A."/>
            <person name="Moore B.C."/>
            <person name="Porat I."/>
            <person name="Palmeiri A."/>
            <person name="Rouse G."/>
            <person name="Saenphimmachak C."/>
            <person name="Soell D."/>
            <person name="Van Dien S."/>
            <person name="Wang T."/>
            <person name="Whitman W.B."/>
            <person name="Xia Q."/>
            <person name="Zhang Y."/>
            <person name="Larimer F.W."/>
            <person name="Olson M.V."/>
            <person name="Leigh J.A."/>
        </authorList>
    </citation>
    <scope>NUCLEOTIDE SEQUENCE [LARGE SCALE GENOMIC DNA]</scope>
    <source>
        <strain>DSM 14266 / JCM 13030 / NBRC 101832 / S2 / LL</strain>
    </source>
</reference>
<dbReference type="EC" id="3.5.4.27" evidence="1"/>
<dbReference type="EMBL" id="BX950229">
    <property type="protein sequence ID" value="CAF30747.1"/>
    <property type="molecule type" value="Genomic_DNA"/>
</dbReference>
<dbReference type="RefSeq" id="WP_011171135.1">
    <property type="nucleotide sequence ID" value="NC_005791.1"/>
</dbReference>
<dbReference type="SMR" id="Q6LY02"/>
<dbReference type="STRING" id="267377.MMP1191"/>
<dbReference type="EnsemblBacteria" id="CAF30747">
    <property type="protein sequence ID" value="CAF30747"/>
    <property type="gene ID" value="MMP1191"/>
</dbReference>
<dbReference type="GeneID" id="2762185"/>
<dbReference type="KEGG" id="mmp:MMP1191"/>
<dbReference type="PATRIC" id="fig|267377.15.peg.1224"/>
<dbReference type="eggNOG" id="arCOG02675">
    <property type="taxonomic scope" value="Archaea"/>
</dbReference>
<dbReference type="HOGENOM" id="CLU_876031_0_0_2"/>
<dbReference type="OrthoDB" id="105468at2157"/>
<dbReference type="UniPathway" id="UPA00640">
    <property type="reaction ID" value="UER00694"/>
</dbReference>
<dbReference type="Proteomes" id="UP000000590">
    <property type="component" value="Chromosome"/>
</dbReference>
<dbReference type="GO" id="GO:0005737">
    <property type="term" value="C:cytoplasm"/>
    <property type="evidence" value="ECO:0007669"/>
    <property type="project" value="UniProtKB-SubCell"/>
</dbReference>
<dbReference type="GO" id="GO:0018759">
    <property type="term" value="F:methenyltetrahydromethanopterin cyclohydrolase activity"/>
    <property type="evidence" value="ECO:0007669"/>
    <property type="project" value="UniProtKB-UniRule"/>
</dbReference>
<dbReference type="GO" id="GO:0019386">
    <property type="term" value="P:methanogenesis, from carbon dioxide"/>
    <property type="evidence" value="ECO:0007669"/>
    <property type="project" value="UniProtKB-UniRule"/>
</dbReference>
<dbReference type="GO" id="GO:0006730">
    <property type="term" value="P:one-carbon metabolic process"/>
    <property type="evidence" value="ECO:0007669"/>
    <property type="project" value="UniProtKB-UniRule"/>
</dbReference>
<dbReference type="CDD" id="cd00545">
    <property type="entry name" value="MCH"/>
    <property type="match status" value="1"/>
</dbReference>
<dbReference type="Gene3D" id="3.10.340.11">
    <property type="entry name" value="Methenyltetrahydromethanopterin Cyclohydrolase, Chain A, domain 1"/>
    <property type="match status" value="1"/>
</dbReference>
<dbReference type="Gene3D" id="3.30.1030.10">
    <property type="entry name" value="Methenyltetrahydromethanopterin Cyclohydrolase, Chain A, domain 2"/>
    <property type="match status" value="1"/>
</dbReference>
<dbReference type="HAMAP" id="MF_00486">
    <property type="entry name" value="McH"/>
    <property type="match status" value="1"/>
</dbReference>
<dbReference type="InterPro" id="IPR003209">
    <property type="entry name" value="METHMP_CycHdrlase"/>
</dbReference>
<dbReference type="NCBIfam" id="TIGR03120">
    <property type="entry name" value="one_C_mch"/>
    <property type="match status" value="1"/>
</dbReference>
<dbReference type="Pfam" id="PF02289">
    <property type="entry name" value="MCH"/>
    <property type="match status" value="1"/>
</dbReference>
<dbReference type="SUPFAM" id="SSF56199">
    <property type="entry name" value="Methenyltetrahydromethanopterin cyclohydrolase"/>
    <property type="match status" value="1"/>
</dbReference>
<comment type="function">
    <text evidence="1">Catalyzes the reversible interconversion of 5-formyl-H(4)MPT to methenyl-H(4)MPT(+).</text>
</comment>
<comment type="catalytic activity">
    <reaction evidence="1">
        <text>5,10-methenyl-5,6,7,8-tetrahydromethanopterin + H2O = N(5)-formyl-5,6,7,8-tetrahydromethanopterin + H(+)</text>
        <dbReference type="Rhea" id="RHEA:19053"/>
        <dbReference type="ChEBI" id="CHEBI:15377"/>
        <dbReference type="ChEBI" id="CHEBI:15378"/>
        <dbReference type="ChEBI" id="CHEBI:58018"/>
        <dbReference type="ChEBI" id="CHEBI:58337"/>
        <dbReference type="EC" id="3.5.4.27"/>
    </reaction>
</comment>
<comment type="pathway">
    <text evidence="1">One-carbon metabolism; methanogenesis from CO(2); 5,10-methenyl-5,6,7,8-tetrahydromethanopterin from CO(2): step 3/3.</text>
</comment>
<comment type="subcellular location">
    <subcellularLocation>
        <location evidence="1">Cytoplasm</location>
    </subcellularLocation>
</comment>
<comment type="similarity">
    <text evidence="1">Belongs to the MCH family.</text>
</comment>
<name>MCH_METMP</name>
<sequence length="323" mass="34823">MLSVNLASLPIVEEMISRKEDLNIEVIKLENGATVLDCGVNVMGSFEAGKLFTKICLGGLAHVGISISGSLDNKLVLPCVKIKTSHPAIATLGSQKAGWSVSVGKYFAMGSGPARALAMMPKATYEEIDYRDEADVAILCLESSQLPDENVADHVAEKCGVDVSKVYLLVAPTASMVGAVQISGRVVENGTYKMLEALHFDVRKVKFAAGIAPVAPVIGDDLKMMGATNDMVLYGGRTFYYVKSDEGDDIENLCKSLPSCSAETYGKPFLDVFKEANYDFYKIDKGMFAPAIVTINDLRTGKLMSYGETNVDVIKKSLKFSQL</sequence>
<evidence type="ECO:0000255" key="1">
    <source>
        <dbReference type="HAMAP-Rule" id="MF_00486"/>
    </source>
</evidence>
<accession>Q6LY02</accession>
<protein>
    <recommendedName>
        <fullName evidence="1">Methenyltetrahydromethanopterin cyclohydrolase</fullName>
        <ecNumber evidence="1">3.5.4.27</ecNumber>
    </recommendedName>
    <alternativeName>
        <fullName evidence="1">Methenyl-H4MPT cyclohydrolase</fullName>
    </alternativeName>
</protein>
<feature type="chain" id="PRO_1000014403" description="Methenyltetrahydromethanopterin cyclohydrolase">
    <location>
        <begin position="1"/>
        <end position="323"/>
    </location>
</feature>
<organism>
    <name type="scientific">Methanococcus maripaludis (strain DSM 14266 / JCM 13030 / NBRC 101832 / S2 / LL)</name>
    <dbReference type="NCBI Taxonomy" id="267377"/>
    <lineage>
        <taxon>Archaea</taxon>
        <taxon>Methanobacteriati</taxon>
        <taxon>Methanobacteriota</taxon>
        <taxon>Methanomada group</taxon>
        <taxon>Methanococci</taxon>
        <taxon>Methanococcales</taxon>
        <taxon>Methanococcaceae</taxon>
        <taxon>Methanococcus</taxon>
    </lineage>
</organism>
<gene>
    <name evidence="1" type="primary">mch</name>
    <name type="ordered locus">MMP1191</name>
</gene>
<keyword id="KW-0963">Cytoplasm</keyword>
<keyword id="KW-0378">Hydrolase</keyword>
<keyword id="KW-0484">Methanogenesis</keyword>
<keyword id="KW-0554">One-carbon metabolism</keyword>
<keyword id="KW-1185">Reference proteome</keyword>